<dbReference type="EC" id="7.1.2.2" evidence="1"/>
<dbReference type="EMBL" id="CP000416">
    <property type="protein sequence ID" value="ABJ64384.1"/>
    <property type="molecule type" value="Genomic_DNA"/>
</dbReference>
<dbReference type="RefSeq" id="WP_011668148.1">
    <property type="nucleotide sequence ID" value="NC_008497.1"/>
</dbReference>
<dbReference type="SMR" id="Q03QY8"/>
<dbReference type="STRING" id="387344.LVIS_1279"/>
<dbReference type="KEGG" id="lbr:LVIS_1279"/>
<dbReference type="eggNOG" id="COG0055">
    <property type="taxonomic scope" value="Bacteria"/>
</dbReference>
<dbReference type="HOGENOM" id="CLU_022398_0_2_9"/>
<dbReference type="Proteomes" id="UP000001652">
    <property type="component" value="Chromosome"/>
</dbReference>
<dbReference type="GO" id="GO:0005886">
    <property type="term" value="C:plasma membrane"/>
    <property type="evidence" value="ECO:0007669"/>
    <property type="project" value="UniProtKB-SubCell"/>
</dbReference>
<dbReference type="GO" id="GO:0045259">
    <property type="term" value="C:proton-transporting ATP synthase complex"/>
    <property type="evidence" value="ECO:0007669"/>
    <property type="project" value="UniProtKB-KW"/>
</dbReference>
<dbReference type="GO" id="GO:0005524">
    <property type="term" value="F:ATP binding"/>
    <property type="evidence" value="ECO:0007669"/>
    <property type="project" value="UniProtKB-UniRule"/>
</dbReference>
<dbReference type="GO" id="GO:0016887">
    <property type="term" value="F:ATP hydrolysis activity"/>
    <property type="evidence" value="ECO:0007669"/>
    <property type="project" value="InterPro"/>
</dbReference>
<dbReference type="GO" id="GO:0046933">
    <property type="term" value="F:proton-transporting ATP synthase activity, rotational mechanism"/>
    <property type="evidence" value="ECO:0007669"/>
    <property type="project" value="UniProtKB-UniRule"/>
</dbReference>
<dbReference type="CDD" id="cd18110">
    <property type="entry name" value="ATP-synt_F1_beta_C"/>
    <property type="match status" value="1"/>
</dbReference>
<dbReference type="CDD" id="cd18115">
    <property type="entry name" value="ATP-synt_F1_beta_N"/>
    <property type="match status" value="1"/>
</dbReference>
<dbReference type="CDD" id="cd01133">
    <property type="entry name" value="F1-ATPase_beta_CD"/>
    <property type="match status" value="1"/>
</dbReference>
<dbReference type="FunFam" id="1.10.1140.10:FF:000001">
    <property type="entry name" value="ATP synthase subunit beta"/>
    <property type="match status" value="1"/>
</dbReference>
<dbReference type="FunFam" id="3.40.50.300:FF:000004">
    <property type="entry name" value="ATP synthase subunit beta"/>
    <property type="match status" value="1"/>
</dbReference>
<dbReference type="Gene3D" id="2.40.10.170">
    <property type="match status" value="1"/>
</dbReference>
<dbReference type="Gene3D" id="1.10.1140.10">
    <property type="entry name" value="Bovine Mitochondrial F1-atpase, Atp Synthase Beta Chain, Chain D, domain 3"/>
    <property type="match status" value="1"/>
</dbReference>
<dbReference type="Gene3D" id="3.40.50.300">
    <property type="entry name" value="P-loop containing nucleotide triphosphate hydrolases"/>
    <property type="match status" value="1"/>
</dbReference>
<dbReference type="HAMAP" id="MF_01347">
    <property type="entry name" value="ATP_synth_beta_bact"/>
    <property type="match status" value="1"/>
</dbReference>
<dbReference type="InterPro" id="IPR003593">
    <property type="entry name" value="AAA+_ATPase"/>
</dbReference>
<dbReference type="InterPro" id="IPR055190">
    <property type="entry name" value="ATP-synt_VA_C"/>
</dbReference>
<dbReference type="InterPro" id="IPR005722">
    <property type="entry name" value="ATP_synth_F1_bsu"/>
</dbReference>
<dbReference type="InterPro" id="IPR020003">
    <property type="entry name" value="ATPase_a/bsu_AS"/>
</dbReference>
<dbReference type="InterPro" id="IPR050053">
    <property type="entry name" value="ATPase_alpha/beta_chains"/>
</dbReference>
<dbReference type="InterPro" id="IPR004100">
    <property type="entry name" value="ATPase_F1/V1/A1_a/bsu_N"/>
</dbReference>
<dbReference type="InterPro" id="IPR036121">
    <property type="entry name" value="ATPase_F1/V1/A1_a/bsu_N_sf"/>
</dbReference>
<dbReference type="InterPro" id="IPR000194">
    <property type="entry name" value="ATPase_F1/V1/A1_a/bsu_nucl-bd"/>
</dbReference>
<dbReference type="InterPro" id="IPR024034">
    <property type="entry name" value="ATPase_F1/V1_b/a_C"/>
</dbReference>
<dbReference type="InterPro" id="IPR027417">
    <property type="entry name" value="P-loop_NTPase"/>
</dbReference>
<dbReference type="NCBIfam" id="TIGR01039">
    <property type="entry name" value="atpD"/>
    <property type="match status" value="1"/>
</dbReference>
<dbReference type="PANTHER" id="PTHR15184">
    <property type="entry name" value="ATP SYNTHASE"/>
    <property type="match status" value="1"/>
</dbReference>
<dbReference type="PANTHER" id="PTHR15184:SF71">
    <property type="entry name" value="ATP SYNTHASE SUBUNIT BETA, MITOCHONDRIAL"/>
    <property type="match status" value="1"/>
</dbReference>
<dbReference type="Pfam" id="PF00006">
    <property type="entry name" value="ATP-synt_ab"/>
    <property type="match status" value="1"/>
</dbReference>
<dbReference type="Pfam" id="PF02874">
    <property type="entry name" value="ATP-synt_ab_N"/>
    <property type="match status" value="1"/>
</dbReference>
<dbReference type="Pfam" id="PF22919">
    <property type="entry name" value="ATP-synt_VA_C"/>
    <property type="match status" value="1"/>
</dbReference>
<dbReference type="SMART" id="SM00382">
    <property type="entry name" value="AAA"/>
    <property type="match status" value="1"/>
</dbReference>
<dbReference type="SUPFAM" id="SSF47917">
    <property type="entry name" value="C-terminal domain of alpha and beta subunits of F1 ATP synthase"/>
    <property type="match status" value="1"/>
</dbReference>
<dbReference type="SUPFAM" id="SSF50615">
    <property type="entry name" value="N-terminal domain of alpha and beta subunits of F1 ATP synthase"/>
    <property type="match status" value="1"/>
</dbReference>
<dbReference type="SUPFAM" id="SSF52540">
    <property type="entry name" value="P-loop containing nucleoside triphosphate hydrolases"/>
    <property type="match status" value="1"/>
</dbReference>
<dbReference type="PROSITE" id="PS00152">
    <property type="entry name" value="ATPASE_ALPHA_BETA"/>
    <property type="match status" value="1"/>
</dbReference>
<protein>
    <recommendedName>
        <fullName evidence="1">ATP synthase subunit beta</fullName>
        <ecNumber evidence="1">7.1.2.2</ecNumber>
    </recommendedName>
    <alternativeName>
        <fullName evidence="1">ATP synthase F1 sector subunit beta</fullName>
    </alternativeName>
    <alternativeName>
        <fullName evidence="1">F-ATPase subunit beta</fullName>
    </alternativeName>
</protein>
<reference key="1">
    <citation type="journal article" date="2006" name="Proc. Natl. Acad. Sci. U.S.A.">
        <title>Comparative genomics of the lactic acid bacteria.</title>
        <authorList>
            <person name="Makarova K.S."/>
            <person name="Slesarev A."/>
            <person name="Wolf Y.I."/>
            <person name="Sorokin A."/>
            <person name="Mirkin B."/>
            <person name="Koonin E.V."/>
            <person name="Pavlov A."/>
            <person name="Pavlova N."/>
            <person name="Karamychev V."/>
            <person name="Polouchine N."/>
            <person name="Shakhova V."/>
            <person name="Grigoriev I."/>
            <person name="Lou Y."/>
            <person name="Rohksar D."/>
            <person name="Lucas S."/>
            <person name="Huang K."/>
            <person name="Goodstein D.M."/>
            <person name="Hawkins T."/>
            <person name="Plengvidhya V."/>
            <person name="Welker D."/>
            <person name="Hughes J."/>
            <person name="Goh Y."/>
            <person name="Benson A."/>
            <person name="Baldwin K."/>
            <person name="Lee J.-H."/>
            <person name="Diaz-Muniz I."/>
            <person name="Dosti B."/>
            <person name="Smeianov V."/>
            <person name="Wechter W."/>
            <person name="Barabote R."/>
            <person name="Lorca G."/>
            <person name="Altermann E."/>
            <person name="Barrangou R."/>
            <person name="Ganesan B."/>
            <person name="Xie Y."/>
            <person name="Rawsthorne H."/>
            <person name="Tamir D."/>
            <person name="Parker C."/>
            <person name="Breidt F."/>
            <person name="Broadbent J.R."/>
            <person name="Hutkins R."/>
            <person name="O'Sullivan D."/>
            <person name="Steele J."/>
            <person name="Unlu G."/>
            <person name="Saier M.H. Jr."/>
            <person name="Klaenhammer T."/>
            <person name="Richardson P."/>
            <person name="Kozyavkin S."/>
            <person name="Weimer B.C."/>
            <person name="Mills D.A."/>
        </authorList>
    </citation>
    <scope>NUCLEOTIDE SEQUENCE [LARGE SCALE GENOMIC DNA]</scope>
    <source>
        <strain>ATCC 367 / BCRC 12310 / CIP 105137 / JCM 1170 / LMG 11437 / NCIMB 947 / NCTC 947</strain>
    </source>
</reference>
<evidence type="ECO:0000255" key="1">
    <source>
        <dbReference type="HAMAP-Rule" id="MF_01347"/>
    </source>
</evidence>
<name>ATPB_LEVBA</name>
<gene>
    <name evidence="1" type="primary">atpD</name>
    <name type="ordered locus">LVIS_1279</name>
</gene>
<feature type="chain" id="PRO_1000055125" description="ATP synthase subunit beta">
    <location>
        <begin position="1"/>
        <end position="471"/>
    </location>
</feature>
<feature type="binding site" evidence="1">
    <location>
        <begin position="153"/>
        <end position="160"/>
    </location>
    <ligand>
        <name>ATP</name>
        <dbReference type="ChEBI" id="CHEBI:30616"/>
    </ligand>
</feature>
<organism>
    <name type="scientific">Levilactobacillus brevis (strain ATCC 367 / BCRC 12310 / CIP 105137 / JCM 1170 / LMG 11437 / NCIMB 947 / NCTC 947)</name>
    <name type="common">Lactobacillus brevis</name>
    <dbReference type="NCBI Taxonomy" id="387344"/>
    <lineage>
        <taxon>Bacteria</taxon>
        <taxon>Bacillati</taxon>
        <taxon>Bacillota</taxon>
        <taxon>Bacilli</taxon>
        <taxon>Lactobacillales</taxon>
        <taxon>Lactobacillaceae</taxon>
        <taxon>Levilactobacillus</taxon>
    </lineage>
</organism>
<accession>Q03QY8</accession>
<comment type="function">
    <text evidence="1">Produces ATP from ADP in the presence of a proton gradient across the membrane. The catalytic sites are hosted primarily by the beta subunits.</text>
</comment>
<comment type="catalytic activity">
    <reaction evidence="1">
        <text>ATP + H2O + 4 H(+)(in) = ADP + phosphate + 5 H(+)(out)</text>
        <dbReference type="Rhea" id="RHEA:57720"/>
        <dbReference type="ChEBI" id="CHEBI:15377"/>
        <dbReference type="ChEBI" id="CHEBI:15378"/>
        <dbReference type="ChEBI" id="CHEBI:30616"/>
        <dbReference type="ChEBI" id="CHEBI:43474"/>
        <dbReference type="ChEBI" id="CHEBI:456216"/>
        <dbReference type="EC" id="7.1.2.2"/>
    </reaction>
</comment>
<comment type="subunit">
    <text evidence="1">F-type ATPases have 2 components, CF(1) - the catalytic core - and CF(0) - the membrane proton channel. CF(1) has five subunits: alpha(3), beta(3), gamma(1), delta(1), epsilon(1). CF(0) has three main subunits: a(1), b(2) and c(9-12). The alpha and beta chains form an alternating ring which encloses part of the gamma chain. CF(1) is attached to CF(0) by a central stalk formed by the gamma and epsilon chains, while a peripheral stalk is formed by the delta and b chains.</text>
</comment>
<comment type="subcellular location">
    <subcellularLocation>
        <location evidence="1">Cell membrane</location>
        <topology evidence="1">Peripheral membrane protein</topology>
    </subcellularLocation>
</comment>
<comment type="similarity">
    <text evidence="1">Belongs to the ATPase alpha/beta chains family.</text>
</comment>
<keyword id="KW-0066">ATP synthesis</keyword>
<keyword id="KW-0067">ATP-binding</keyword>
<keyword id="KW-1003">Cell membrane</keyword>
<keyword id="KW-0139">CF(1)</keyword>
<keyword id="KW-0375">Hydrogen ion transport</keyword>
<keyword id="KW-0406">Ion transport</keyword>
<keyword id="KW-0472">Membrane</keyword>
<keyword id="KW-0547">Nucleotide-binding</keyword>
<keyword id="KW-1185">Reference proteome</keyword>
<keyword id="KW-1278">Translocase</keyword>
<keyword id="KW-0813">Transport</keyword>
<proteinExistence type="inferred from homology"/>
<sequence>MSAGKIVQVIGPVVDVEFPLNDELPDINTALNIKKDDGSVLVTEVALELGDGVMRTIAMDGTDGLRRGLEVENTGASISVPVGDDTLGRVFNVLGDPIDGGAEFGPDAERMPIHRDAPKYDELNPTTEILETGIKVIDLLEPYVRGGKIGLFGGAGVGKTVLIQELIHNIAQGHNGISVFTGVGERTREGNDMYWEMKGSGVLKQTAMVYGQMNEPPGARMRVALTGLTIAEYFRDVKGQDVLLFIDNIFRFTQAGSEVSALLGRIPSAVGYQPTLATEMGQLQERITSTKKGSITSIQAVYVPADDYTDPAPATTFAHLDATTNLERALTQQGIYPAVDPLASTSTALAPEIIGQEHYDVATEVQRVLQRYHELQDIISILGMDELSDEEQTIVQRARRIQFFLSQPFSVASQFTGMDGKYVKLEDTIRSFKGILDGKYDDLPEDAFRNCGAIEDAVEKAKQMNDAVANN</sequence>